<proteinExistence type="inferred from homology"/>
<name>CET1_DEBHA</name>
<gene>
    <name type="primary">CET1</name>
    <name type="ordered locus">DEHA2E22726g</name>
</gene>
<accession>Q6BND2</accession>
<reference key="1">
    <citation type="journal article" date="2004" name="Nature">
        <title>Genome evolution in yeasts.</title>
        <authorList>
            <person name="Dujon B."/>
            <person name="Sherman D."/>
            <person name="Fischer G."/>
            <person name="Durrens P."/>
            <person name="Casaregola S."/>
            <person name="Lafontaine I."/>
            <person name="de Montigny J."/>
            <person name="Marck C."/>
            <person name="Neuveglise C."/>
            <person name="Talla E."/>
            <person name="Goffard N."/>
            <person name="Frangeul L."/>
            <person name="Aigle M."/>
            <person name="Anthouard V."/>
            <person name="Babour A."/>
            <person name="Barbe V."/>
            <person name="Barnay S."/>
            <person name="Blanchin S."/>
            <person name="Beckerich J.-M."/>
            <person name="Beyne E."/>
            <person name="Bleykasten C."/>
            <person name="Boisrame A."/>
            <person name="Boyer J."/>
            <person name="Cattolico L."/>
            <person name="Confanioleri F."/>
            <person name="de Daruvar A."/>
            <person name="Despons L."/>
            <person name="Fabre E."/>
            <person name="Fairhead C."/>
            <person name="Ferry-Dumazet H."/>
            <person name="Groppi A."/>
            <person name="Hantraye F."/>
            <person name="Hennequin C."/>
            <person name="Jauniaux N."/>
            <person name="Joyet P."/>
            <person name="Kachouri R."/>
            <person name="Kerrest A."/>
            <person name="Koszul R."/>
            <person name="Lemaire M."/>
            <person name="Lesur I."/>
            <person name="Ma L."/>
            <person name="Muller H."/>
            <person name="Nicaud J.-M."/>
            <person name="Nikolski M."/>
            <person name="Oztas S."/>
            <person name="Ozier-Kalogeropoulos O."/>
            <person name="Pellenz S."/>
            <person name="Potier S."/>
            <person name="Richard G.-F."/>
            <person name="Straub M.-L."/>
            <person name="Suleau A."/>
            <person name="Swennen D."/>
            <person name="Tekaia F."/>
            <person name="Wesolowski-Louvel M."/>
            <person name="Westhof E."/>
            <person name="Wirth B."/>
            <person name="Zeniou-Meyer M."/>
            <person name="Zivanovic Y."/>
            <person name="Bolotin-Fukuhara M."/>
            <person name="Thierry A."/>
            <person name="Bouchier C."/>
            <person name="Caudron B."/>
            <person name="Scarpelli C."/>
            <person name="Gaillardin C."/>
            <person name="Weissenbach J."/>
            <person name="Wincker P."/>
            <person name="Souciet J.-L."/>
        </authorList>
    </citation>
    <scope>NUCLEOTIDE SEQUENCE [LARGE SCALE GENOMIC DNA]</scope>
    <source>
        <strain>ATCC 36239 / CBS 767 / BCRC 21394 / JCM 1990 / NBRC 0083 / IGC 2968</strain>
    </source>
</reference>
<sequence length="476" mass="54622">MNVGSILNDEPSPSKKTTNDDSGDSVRPDMSTYQRHSLVNLLNDPAPNNELKTKETKKDWSEDEHSNFRVPVTEPNQQLSPVLRRSSIADITNEKDVDISSSTEHPIEQDKSEKDEDELTRISKLKSTNKPRRYTEPPIWAQEWIPTSYQGTANGTPVVNAQESSLSSKRVFDRSSTVNVDLECSITGVIPPPSVTRTIAEWIYANFTEIPDDQRKYVELELKFGTIIDKRAGHRIDINVSTECIFTDNSNTYFDMGVHEVGWNDMCKFLDDLEKSYQDELRRSPQANSNSPKRKFNILESDITDNFYQITSRNEQPKSIRISKDNLLDPPRYTAINKQRLSSLFIHNPSSMYDLRLSLSYENPIADNNIDGIIKKNQPTLTRIKKRNSWTHRPTVTRFDMTRVLSPRESKNKSGKKIVEQDQSFEVELEVDTLELFNGFDKFKSGADSIRFEELVEIFVNNARCLNNRVTKLANK</sequence>
<feature type="chain" id="PRO_0000210115" description="mRNA-capping enzyme subunit beta">
    <location>
        <begin position="1"/>
        <end position="476"/>
    </location>
</feature>
<feature type="region of interest" description="Disordered" evidence="3">
    <location>
        <begin position="1"/>
        <end position="133"/>
    </location>
</feature>
<feature type="compositionally biased region" description="Basic and acidic residues" evidence="3">
    <location>
        <begin position="51"/>
        <end position="67"/>
    </location>
</feature>
<feature type="compositionally biased region" description="Basic and acidic residues" evidence="3">
    <location>
        <begin position="105"/>
        <end position="114"/>
    </location>
</feature>
<feature type="compositionally biased region" description="Basic residues" evidence="3">
    <location>
        <begin position="123"/>
        <end position="132"/>
    </location>
</feature>
<evidence type="ECO:0000250" key="1"/>
<evidence type="ECO:0000250" key="2">
    <source>
        <dbReference type="UniProtKB" id="O13297"/>
    </source>
</evidence>
<evidence type="ECO:0000256" key="3">
    <source>
        <dbReference type="SAM" id="MobiDB-lite"/>
    </source>
</evidence>
<evidence type="ECO:0000305" key="4"/>
<protein>
    <recommendedName>
        <fullName>mRNA-capping enzyme subunit beta</fullName>
        <ecNumber evidence="2">3.6.1.74</ecNumber>
    </recommendedName>
    <alternativeName>
        <fullName>mRNA 5'-phosphatase</fullName>
    </alternativeName>
    <alternativeName>
        <fullName>mRNA 5'-triphosphate monophosphatase</fullName>
    </alternativeName>
</protein>
<organism>
    <name type="scientific">Debaryomyces hansenii (strain ATCC 36239 / CBS 767 / BCRC 21394 / JCM 1990 / NBRC 0083 / IGC 2968)</name>
    <name type="common">Yeast</name>
    <name type="synonym">Torulaspora hansenii</name>
    <dbReference type="NCBI Taxonomy" id="284592"/>
    <lineage>
        <taxon>Eukaryota</taxon>
        <taxon>Fungi</taxon>
        <taxon>Dikarya</taxon>
        <taxon>Ascomycota</taxon>
        <taxon>Saccharomycotina</taxon>
        <taxon>Pichiomycetes</taxon>
        <taxon>Debaryomycetaceae</taxon>
        <taxon>Debaryomyces</taxon>
    </lineage>
</organism>
<comment type="function">
    <text evidence="2">First step of mRNA capping. Converts the 5'-triphosphate end of a nascent mRNA chain into a diphosphate end.</text>
</comment>
<comment type="catalytic activity">
    <reaction evidence="2">
        <text>a 5'-end triphospho-ribonucleoside in mRNA + H2O = a 5'-end diphospho-ribonucleoside in mRNA + phosphate + H(+)</text>
        <dbReference type="Rhea" id="RHEA:67004"/>
        <dbReference type="Rhea" id="RHEA-COMP:17164"/>
        <dbReference type="Rhea" id="RHEA-COMP:17165"/>
        <dbReference type="ChEBI" id="CHEBI:15377"/>
        <dbReference type="ChEBI" id="CHEBI:15378"/>
        <dbReference type="ChEBI" id="CHEBI:43474"/>
        <dbReference type="ChEBI" id="CHEBI:167616"/>
        <dbReference type="ChEBI" id="CHEBI:167618"/>
        <dbReference type="EC" id="3.6.1.74"/>
    </reaction>
    <physiologicalReaction direction="left-to-right" evidence="2">
        <dbReference type="Rhea" id="RHEA:67005"/>
    </physiologicalReaction>
</comment>
<comment type="cofactor">
    <cofactor evidence="2">
        <name>Mg(2+)</name>
        <dbReference type="ChEBI" id="CHEBI:18420"/>
    </cofactor>
</comment>
<comment type="subunit">
    <text evidence="2">Heterodimer. The mRNA-capping enzyme is composed of two separate chains alpha and beta, respectively a mRNA guanylyltransferase and an mRNA 5'-triphosphate monophosphatase.</text>
</comment>
<comment type="subcellular location">
    <subcellularLocation>
        <location evidence="1">Nucleus</location>
    </subcellularLocation>
</comment>
<comment type="similarity">
    <text evidence="4">Belongs to the fungal TPase family.</text>
</comment>
<keyword id="KW-0378">Hydrolase</keyword>
<keyword id="KW-0506">mRNA capping</keyword>
<keyword id="KW-0507">mRNA processing</keyword>
<keyword id="KW-0539">Nucleus</keyword>
<keyword id="KW-1185">Reference proteome</keyword>
<dbReference type="EC" id="3.6.1.74" evidence="2"/>
<dbReference type="EMBL" id="CR382137">
    <property type="protein sequence ID" value="CAG88572.2"/>
    <property type="molecule type" value="Genomic_DNA"/>
</dbReference>
<dbReference type="RefSeq" id="XP_460288.2">
    <property type="nucleotide sequence ID" value="XM_460288.1"/>
</dbReference>
<dbReference type="SMR" id="Q6BND2"/>
<dbReference type="FunCoup" id="Q6BND2">
    <property type="interactions" value="76"/>
</dbReference>
<dbReference type="STRING" id="284592.Q6BND2"/>
<dbReference type="GeneID" id="2903003"/>
<dbReference type="KEGG" id="dha:DEHA2E22726g"/>
<dbReference type="VEuPathDB" id="FungiDB:DEHA2E22726g"/>
<dbReference type="eggNOG" id="ENOG502RZAX">
    <property type="taxonomic scope" value="Eukaryota"/>
</dbReference>
<dbReference type="HOGENOM" id="CLU_028201_0_0_1"/>
<dbReference type="InParanoid" id="Q6BND2"/>
<dbReference type="OMA" id="DWVYATI"/>
<dbReference type="OrthoDB" id="272147at2759"/>
<dbReference type="Proteomes" id="UP000000599">
    <property type="component" value="Chromosome E"/>
</dbReference>
<dbReference type="GO" id="GO:0031533">
    <property type="term" value="C:mRNA capping enzyme complex"/>
    <property type="evidence" value="ECO:0007669"/>
    <property type="project" value="TreeGrafter"/>
</dbReference>
<dbReference type="GO" id="GO:0140818">
    <property type="term" value="F:mRNA 5'-triphosphate monophosphatase activity"/>
    <property type="evidence" value="ECO:0007669"/>
    <property type="project" value="RHEA"/>
</dbReference>
<dbReference type="GO" id="GO:0004651">
    <property type="term" value="F:polynucleotide 5'-phosphatase activity"/>
    <property type="evidence" value="ECO:0007669"/>
    <property type="project" value="UniProtKB-EC"/>
</dbReference>
<dbReference type="GO" id="GO:0006370">
    <property type="term" value="P:7-methylguanosine mRNA capping"/>
    <property type="evidence" value="ECO:0007669"/>
    <property type="project" value="UniProtKB-KW"/>
</dbReference>
<dbReference type="CDD" id="cd07470">
    <property type="entry name" value="CYTH-like_mRNA_RTPase"/>
    <property type="match status" value="1"/>
</dbReference>
<dbReference type="Gene3D" id="3.20.100.10">
    <property type="entry name" value="mRNA triphosphatase Cet1-like"/>
    <property type="match status" value="1"/>
</dbReference>
<dbReference type="InterPro" id="IPR040343">
    <property type="entry name" value="Cet1/Ctl1"/>
</dbReference>
<dbReference type="InterPro" id="IPR033469">
    <property type="entry name" value="CYTH-like_dom_sf"/>
</dbReference>
<dbReference type="InterPro" id="IPR004206">
    <property type="entry name" value="mRNA_triPase_Cet1"/>
</dbReference>
<dbReference type="InterPro" id="IPR037009">
    <property type="entry name" value="mRNA_triPase_Cet1_sf"/>
</dbReference>
<dbReference type="PANTHER" id="PTHR28118:SF1">
    <property type="entry name" value="POLYNUCLEOTIDE 5'-TRIPHOSPHATASE CTL1-RELATED"/>
    <property type="match status" value="1"/>
</dbReference>
<dbReference type="PANTHER" id="PTHR28118">
    <property type="entry name" value="POLYNUCLEOTIDE 5'-TRIPHOSPHATASE-RELATED"/>
    <property type="match status" value="1"/>
</dbReference>
<dbReference type="Pfam" id="PF02940">
    <property type="entry name" value="mRNA_triPase"/>
    <property type="match status" value="1"/>
</dbReference>
<dbReference type="SUPFAM" id="SSF55154">
    <property type="entry name" value="CYTH-like phosphatases"/>
    <property type="match status" value="1"/>
</dbReference>